<evidence type="ECO:0000250" key="1"/>
<evidence type="ECO:0000305" key="2"/>
<dbReference type="EC" id="2.5.1.46"/>
<dbReference type="EMBL" id="CR382139">
    <property type="protein sequence ID" value="CAG90094.1"/>
    <property type="molecule type" value="Genomic_DNA"/>
</dbReference>
<dbReference type="RefSeq" id="XP_461646.1">
    <property type="nucleotide sequence ID" value="XM_461646.1"/>
</dbReference>
<dbReference type="SMR" id="Q6BJH5"/>
<dbReference type="FunCoup" id="Q6BJH5">
    <property type="interactions" value="726"/>
</dbReference>
<dbReference type="STRING" id="284592.Q6BJH5"/>
<dbReference type="GeneID" id="2904512"/>
<dbReference type="KEGG" id="dha:DEHA2G02376g"/>
<dbReference type="eggNOG" id="KOG2924">
    <property type="taxonomic scope" value="Eukaryota"/>
</dbReference>
<dbReference type="HOGENOM" id="CLU_039781_0_0_1"/>
<dbReference type="InParanoid" id="Q6BJH5"/>
<dbReference type="OMA" id="HSIINAN"/>
<dbReference type="OrthoDB" id="294378at2759"/>
<dbReference type="UniPathway" id="UPA00354"/>
<dbReference type="Proteomes" id="UP000000599">
    <property type="component" value="Chromosome G"/>
</dbReference>
<dbReference type="GO" id="GO:0005737">
    <property type="term" value="C:cytoplasm"/>
    <property type="evidence" value="ECO:0007669"/>
    <property type="project" value="TreeGrafter"/>
</dbReference>
<dbReference type="GO" id="GO:0034038">
    <property type="term" value="F:deoxyhypusine synthase activity"/>
    <property type="evidence" value="ECO:0007669"/>
    <property type="project" value="UniProtKB-EC"/>
</dbReference>
<dbReference type="FunFam" id="3.40.910.10:FF:000003">
    <property type="entry name" value="Deoxyhypusine synthase"/>
    <property type="match status" value="1"/>
</dbReference>
<dbReference type="Gene3D" id="3.40.910.10">
    <property type="entry name" value="Deoxyhypusine synthase"/>
    <property type="match status" value="1"/>
</dbReference>
<dbReference type="InterPro" id="IPR002773">
    <property type="entry name" value="Deoxyhypusine_synthase"/>
</dbReference>
<dbReference type="InterPro" id="IPR036982">
    <property type="entry name" value="Deoxyhypusine_synthase_sf"/>
</dbReference>
<dbReference type="InterPro" id="IPR029035">
    <property type="entry name" value="DHS-like_NAD/FAD-binding_dom"/>
</dbReference>
<dbReference type="NCBIfam" id="TIGR00321">
    <property type="entry name" value="dhys"/>
    <property type="match status" value="1"/>
</dbReference>
<dbReference type="PANTHER" id="PTHR11703">
    <property type="entry name" value="DEOXYHYPUSINE SYNTHASE"/>
    <property type="match status" value="1"/>
</dbReference>
<dbReference type="PANTHER" id="PTHR11703:SF0">
    <property type="entry name" value="DEOXYHYPUSINE SYNTHASE"/>
    <property type="match status" value="1"/>
</dbReference>
<dbReference type="Pfam" id="PF01916">
    <property type="entry name" value="DS"/>
    <property type="match status" value="1"/>
</dbReference>
<dbReference type="SUPFAM" id="SSF52467">
    <property type="entry name" value="DHS-like NAD/FAD-binding domain"/>
    <property type="match status" value="1"/>
</dbReference>
<organism>
    <name type="scientific">Debaryomyces hansenii (strain ATCC 36239 / CBS 767 / BCRC 21394 / JCM 1990 / NBRC 0083 / IGC 2968)</name>
    <name type="common">Yeast</name>
    <name type="synonym">Torulaspora hansenii</name>
    <dbReference type="NCBI Taxonomy" id="284592"/>
    <lineage>
        <taxon>Eukaryota</taxon>
        <taxon>Fungi</taxon>
        <taxon>Dikarya</taxon>
        <taxon>Ascomycota</taxon>
        <taxon>Saccharomycotina</taxon>
        <taxon>Pichiomycetes</taxon>
        <taxon>Debaryomycetaceae</taxon>
        <taxon>Debaryomyces</taxon>
    </lineage>
</organism>
<gene>
    <name type="primary">DYS1</name>
    <name type="ordered locus">DEHA2G02376g</name>
</gene>
<reference key="1">
    <citation type="journal article" date="2004" name="Nature">
        <title>Genome evolution in yeasts.</title>
        <authorList>
            <person name="Dujon B."/>
            <person name="Sherman D."/>
            <person name="Fischer G."/>
            <person name="Durrens P."/>
            <person name="Casaregola S."/>
            <person name="Lafontaine I."/>
            <person name="de Montigny J."/>
            <person name="Marck C."/>
            <person name="Neuveglise C."/>
            <person name="Talla E."/>
            <person name="Goffard N."/>
            <person name="Frangeul L."/>
            <person name="Aigle M."/>
            <person name="Anthouard V."/>
            <person name="Babour A."/>
            <person name="Barbe V."/>
            <person name="Barnay S."/>
            <person name="Blanchin S."/>
            <person name="Beckerich J.-M."/>
            <person name="Beyne E."/>
            <person name="Bleykasten C."/>
            <person name="Boisrame A."/>
            <person name="Boyer J."/>
            <person name="Cattolico L."/>
            <person name="Confanioleri F."/>
            <person name="de Daruvar A."/>
            <person name="Despons L."/>
            <person name="Fabre E."/>
            <person name="Fairhead C."/>
            <person name="Ferry-Dumazet H."/>
            <person name="Groppi A."/>
            <person name="Hantraye F."/>
            <person name="Hennequin C."/>
            <person name="Jauniaux N."/>
            <person name="Joyet P."/>
            <person name="Kachouri R."/>
            <person name="Kerrest A."/>
            <person name="Koszul R."/>
            <person name="Lemaire M."/>
            <person name="Lesur I."/>
            <person name="Ma L."/>
            <person name="Muller H."/>
            <person name="Nicaud J.-M."/>
            <person name="Nikolski M."/>
            <person name="Oztas S."/>
            <person name="Ozier-Kalogeropoulos O."/>
            <person name="Pellenz S."/>
            <person name="Potier S."/>
            <person name="Richard G.-F."/>
            <person name="Straub M.-L."/>
            <person name="Suleau A."/>
            <person name="Swennen D."/>
            <person name="Tekaia F."/>
            <person name="Wesolowski-Louvel M."/>
            <person name="Westhof E."/>
            <person name="Wirth B."/>
            <person name="Zeniou-Meyer M."/>
            <person name="Zivanovic Y."/>
            <person name="Bolotin-Fukuhara M."/>
            <person name="Thierry A."/>
            <person name="Bouchier C."/>
            <person name="Caudron B."/>
            <person name="Scarpelli C."/>
            <person name="Gaillardin C."/>
            <person name="Weissenbach J."/>
            <person name="Wincker P."/>
            <person name="Souciet J.-L."/>
        </authorList>
    </citation>
    <scope>NUCLEOTIDE SEQUENCE [LARGE SCALE GENOMIC DNA]</scope>
    <source>
        <strain>ATCC 36239 / CBS 767 / BCRC 21394 / JCM 1990 / NBRC 0083 / IGC 2968</strain>
    </source>
</reference>
<name>DHYS_DEBHA</name>
<accession>Q6BJH5</accession>
<proteinExistence type="inferred from homology"/>
<feature type="chain" id="PRO_0000134482" description="Deoxyhypusine synthase">
    <location>
        <begin position="1"/>
        <end position="378"/>
    </location>
</feature>
<feature type="active site" description="Nucleophile" evidence="1">
    <location>
        <position position="346"/>
    </location>
</feature>
<feature type="binding site" evidence="1">
    <location>
        <begin position="107"/>
        <end position="111"/>
    </location>
    <ligand>
        <name>NAD(+)</name>
        <dbReference type="ChEBI" id="CHEBI:57540"/>
    </ligand>
</feature>
<feature type="binding site" evidence="1">
    <location>
        <begin position="133"/>
        <end position="135"/>
    </location>
    <ligand>
        <name>NAD(+)</name>
        <dbReference type="ChEBI" id="CHEBI:57540"/>
    </ligand>
</feature>
<feature type="binding site" evidence="1">
    <location>
        <begin position="138"/>
        <end position="139"/>
    </location>
    <ligand>
        <name>spermidine</name>
        <dbReference type="ChEBI" id="CHEBI:57834"/>
    </ligand>
</feature>
<feature type="binding site" evidence="1">
    <location>
        <position position="139"/>
    </location>
    <ligand>
        <name>NAD(+)</name>
        <dbReference type="ChEBI" id="CHEBI:57540"/>
    </ligand>
</feature>
<feature type="binding site" evidence="1">
    <location>
        <position position="253"/>
    </location>
    <ligand>
        <name>NAD(+)</name>
        <dbReference type="ChEBI" id="CHEBI:57540"/>
    </ligand>
</feature>
<feature type="binding site" evidence="1">
    <location>
        <position position="258"/>
    </location>
    <ligand>
        <name>spermidine</name>
        <dbReference type="ChEBI" id="CHEBI:57834"/>
    </ligand>
</feature>
<feature type="binding site" evidence="1">
    <location>
        <position position="300"/>
    </location>
    <ligand>
        <name>NAD(+)</name>
        <dbReference type="ChEBI" id="CHEBI:57540"/>
    </ligand>
</feature>
<feature type="binding site" evidence="1">
    <location>
        <position position="305"/>
    </location>
    <ligand>
        <name>spermidine</name>
        <dbReference type="ChEBI" id="CHEBI:57834"/>
    </ligand>
</feature>
<feature type="binding site" evidence="1">
    <location>
        <begin position="325"/>
        <end position="326"/>
    </location>
    <ligand>
        <name>NAD(+)</name>
        <dbReference type="ChEBI" id="CHEBI:57540"/>
    </ligand>
</feature>
<feature type="binding site" evidence="1">
    <location>
        <begin position="331"/>
        <end position="333"/>
    </location>
    <ligand>
        <name>spermidine</name>
        <dbReference type="ChEBI" id="CHEBI:57834"/>
    </ligand>
</feature>
<feature type="binding site" evidence="1">
    <location>
        <begin position="340"/>
        <end position="346"/>
    </location>
    <ligand>
        <name>spermidine</name>
        <dbReference type="ChEBI" id="CHEBI:57834"/>
    </ligand>
</feature>
<feature type="binding site" evidence="1">
    <location>
        <begin position="359"/>
        <end position="360"/>
    </location>
    <ligand>
        <name>NAD(+)</name>
        <dbReference type="ChEBI" id="CHEBI:57540"/>
    </ligand>
</feature>
<comment type="function">
    <text evidence="1">Catalyzes the NAD-dependent oxidative cleavage of spermidine and the subsequent transfer of the butylamine moiety of spermidine to the epsilon-amino group of a specific lysine residue of the eIF-5A precursor protein to form the intermediate deoxyhypusine residue.</text>
</comment>
<comment type="catalytic activity">
    <reaction>
        <text>[eIF5A protein]-L-lysine + spermidine = [eIF5A protein]-deoxyhypusine + propane-1,3-diamine</text>
        <dbReference type="Rhea" id="RHEA:33299"/>
        <dbReference type="Rhea" id="RHEA-COMP:10143"/>
        <dbReference type="Rhea" id="RHEA-COMP:10144"/>
        <dbReference type="ChEBI" id="CHEBI:29969"/>
        <dbReference type="ChEBI" id="CHEBI:57484"/>
        <dbReference type="ChEBI" id="CHEBI:57834"/>
        <dbReference type="ChEBI" id="CHEBI:82657"/>
        <dbReference type="EC" id="2.5.1.46"/>
    </reaction>
</comment>
<comment type="cofactor">
    <cofactor evidence="1">
        <name>NAD(+)</name>
        <dbReference type="ChEBI" id="CHEBI:57540"/>
    </cofactor>
</comment>
<comment type="pathway">
    <text>Protein modification; eIF5A hypusination.</text>
</comment>
<comment type="similarity">
    <text evidence="2">Belongs to the deoxyhypusine synthase family.</text>
</comment>
<keyword id="KW-0386">Hypusine biosynthesis</keyword>
<keyword id="KW-0520">NAD</keyword>
<keyword id="KW-1185">Reference proteome</keyword>
<keyword id="KW-0808">Transferase</keyword>
<sequence length="378" mass="41355">MSGSDKLPGLASDAVLKQSIPVPDSFVEIKGIDYSKDSAYNMKAVDLIESMKNMGFQASSVSQACEIINGMRSWRGKHIDSLPEHERTGEFDDEGYQKSTIFMGYTSNLISSGLRDTLRFLVQHKMVSAIVSSAGGIEEDLIKVLAPTYMGEFSLPGKGLRDQGMNRIGNLLVPNDNYCKFEEWIVPILDKCLEEQEEGMKKMGSDGLNADSPACWTPSKLINRLGKEINDESSVLYWAHKNDIPVFCPALTDGSIGDMLFFHTFKASPQQIRLDIVADIRKLNSMSMAASNAGMILLGGGLIKHHICNACLMRNGADYAVYINTGQEFDGSDAGARPDEAISWGKIKAEAKQVKVYADASIVFPLIVAATFASEKPN</sequence>
<protein>
    <recommendedName>
        <fullName>Deoxyhypusine synthase</fullName>
        <shortName>DHS</shortName>
        <ecNumber>2.5.1.46</ecNumber>
    </recommendedName>
</protein>